<organism>
    <name type="scientific">Listeria monocytogenes serovar 1/2a (strain ATCC BAA-679 / EGD-e)</name>
    <dbReference type="NCBI Taxonomy" id="169963"/>
    <lineage>
        <taxon>Bacteria</taxon>
        <taxon>Bacillati</taxon>
        <taxon>Bacillota</taxon>
        <taxon>Bacilli</taxon>
        <taxon>Bacillales</taxon>
        <taxon>Listeriaceae</taxon>
        <taxon>Listeria</taxon>
    </lineage>
</organism>
<name>RF1_LISMO</name>
<feature type="chain" id="PRO_0000177695" description="Peptide chain release factor 1">
    <location>
        <begin position="1"/>
        <end position="358"/>
    </location>
</feature>
<feature type="modified residue" description="N5-methylglutamine" evidence="1">
    <location>
        <position position="233"/>
    </location>
</feature>
<evidence type="ECO:0000255" key="1">
    <source>
        <dbReference type="HAMAP-Rule" id="MF_00093"/>
    </source>
</evidence>
<dbReference type="EMBL" id="AL591983">
    <property type="protein sequence ID" value="CAD00621.1"/>
    <property type="molecule type" value="Genomic_DNA"/>
</dbReference>
<dbReference type="PIR" id="AG1392">
    <property type="entry name" value="AG1392"/>
</dbReference>
<dbReference type="RefSeq" id="NP_466066.1">
    <property type="nucleotide sequence ID" value="NC_003210.1"/>
</dbReference>
<dbReference type="RefSeq" id="WP_009932325.1">
    <property type="nucleotide sequence ID" value="NZ_CP149495.1"/>
</dbReference>
<dbReference type="SMR" id="Q8Y4A8"/>
<dbReference type="STRING" id="169963.gene:17595254"/>
<dbReference type="PaxDb" id="169963-lmo2543"/>
<dbReference type="EnsemblBacteria" id="CAD00621">
    <property type="protein sequence ID" value="CAD00621"/>
    <property type="gene ID" value="CAD00621"/>
</dbReference>
<dbReference type="GeneID" id="986736"/>
<dbReference type="KEGG" id="lmo:lmo2543"/>
<dbReference type="PATRIC" id="fig|169963.11.peg.2605"/>
<dbReference type="eggNOG" id="COG0216">
    <property type="taxonomic scope" value="Bacteria"/>
</dbReference>
<dbReference type="HOGENOM" id="CLU_036856_0_1_9"/>
<dbReference type="OrthoDB" id="9806673at2"/>
<dbReference type="PhylomeDB" id="Q8Y4A8"/>
<dbReference type="BioCyc" id="LMON169963:LMO2543-MONOMER"/>
<dbReference type="PHI-base" id="PHI:9821"/>
<dbReference type="Proteomes" id="UP000000817">
    <property type="component" value="Chromosome"/>
</dbReference>
<dbReference type="GO" id="GO:0005737">
    <property type="term" value="C:cytoplasm"/>
    <property type="evidence" value="ECO:0007669"/>
    <property type="project" value="UniProtKB-SubCell"/>
</dbReference>
<dbReference type="GO" id="GO:0016149">
    <property type="term" value="F:translation release factor activity, codon specific"/>
    <property type="evidence" value="ECO:0007669"/>
    <property type="project" value="UniProtKB-UniRule"/>
</dbReference>
<dbReference type="FunFam" id="3.30.160.20:FF:000004">
    <property type="entry name" value="Peptide chain release factor 1"/>
    <property type="match status" value="1"/>
</dbReference>
<dbReference type="FunFam" id="3.30.70.1660:FF:000002">
    <property type="entry name" value="Peptide chain release factor 1"/>
    <property type="match status" value="1"/>
</dbReference>
<dbReference type="FunFam" id="3.30.70.1660:FF:000004">
    <property type="entry name" value="Peptide chain release factor 1"/>
    <property type="match status" value="1"/>
</dbReference>
<dbReference type="Gene3D" id="3.30.160.20">
    <property type="match status" value="1"/>
</dbReference>
<dbReference type="Gene3D" id="3.30.70.1660">
    <property type="match status" value="1"/>
</dbReference>
<dbReference type="Gene3D" id="6.10.140.1950">
    <property type="match status" value="1"/>
</dbReference>
<dbReference type="HAMAP" id="MF_00093">
    <property type="entry name" value="Rel_fac_1"/>
    <property type="match status" value="1"/>
</dbReference>
<dbReference type="InterPro" id="IPR005139">
    <property type="entry name" value="PCRF"/>
</dbReference>
<dbReference type="InterPro" id="IPR000352">
    <property type="entry name" value="Pep_chain_release_fac_I"/>
</dbReference>
<dbReference type="InterPro" id="IPR045853">
    <property type="entry name" value="Pep_chain_release_fac_I_sf"/>
</dbReference>
<dbReference type="InterPro" id="IPR050057">
    <property type="entry name" value="Prokaryotic/Mito_RF"/>
</dbReference>
<dbReference type="InterPro" id="IPR004373">
    <property type="entry name" value="RF-1"/>
</dbReference>
<dbReference type="NCBIfam" id="TIGR00019">
    <property type="entry name" value="prfA"/>
    <property type="match status" value="1"/>
</dbReference>
<dbReference type="NCBIfam" id="NF001859">
    <property type="entry name" value="PRK00591.1"/>
    <property type="match status" value="1"/>
</dbReference>
<dbReference type="PANTHER" id="PTHR43804">
    <property type="entry name" value="LD18447P"/>
    <property type="match status" value="1"/>
</dbReference>
<dbReference type="PANTHER" id="PTHR43804:SF7">
    <property type="entry name" value="LD18447P"/>
    <property type="match status" value="1"/>
</dbReference>
<dbReference type="Pfam" id="PF03462">
    <property type="entry name" value="PCRF"/>
    <property type="match status" value="1"/>
</dbReference>
<dbReference type="Pfam" id="PF00472">
    <property type="entry name" value="RF-1"/>
    <property type="match status" value="1"/>
</dbReference>
<dbReference type="SMART" id="SM00937">
    <property type="entry name" value="PCRF"/>
    <property type="match status" value="1"/>
</dbReference>
<dbReference type="SUPFAM" id="SSF75620">
    <property type="entry name" value="Release factor"/>
    <property type="match status" value="1"/>
</dbReference>
<dbReference type="PROSITE" id="PS00745">
    <property type="entry name" value="RF_PROK_I"/>
    <property type="match status" value="1"/>
</dbReference>
<proteinExistence type="inferred from homology"/>
<gene>
    <name evidence="1" type="primary">prfA</name>
    <name type="synonym">prf1</name>
    <name type="ordered locus">lmo2543</name>
</gene>
<keyword id="KW-0963">Cytoplasm</keyword>
<keyword id="KW-0488">Methylation</keyword>
<keyword id="KW-0648">Protein biosynthesis</keyword>
<keyword id="KW-1185">Reference proteome</keyword>
<protein>
    <recommendedName>
        <fullName evidence="1">Peptide chain release factor 1</fullName>
        <shortName evidence="1">RF-1</shortName>
    </recommendedName>
</protein>
<comment type="function">
    <text evidence="1">Peptide chain release factor 1 directs the termination of translation in response to the peptide chain termination codons UAG and UAA.</text>
</comment>
<comment type="subcellular location">
    <subcellularLocation>
        <location evidence="1">Cytoplasm</location>
    </subcellularLocation>
</comment>
<comment type="PTM">
    <text evidence="1">Methylated by PrmC. Methylation increases the termination efficiency of RF1.</text>
</comment>
<comment type="similarity">
    <text evidence="1">Belongs to the prokaryotic/mitochondrial release factor family.</text>
</comment>
<sequence length="358" mass="40710">MYDRLQAVEDRYDELNELLSDPDVVSDPKRLRDLSKEQSGITATVETYREYKNVNEQINETKELLGEKLDDEMREMAKEEFAELQKEKTDLEERLKLLLVPKDPNDDKNVILEIRGAAGGDEAALFAGDLFRMYSKYAESRGWKVEIMDANPTGIGGYKEIIAMMNGNDAFSRMKYENGAHRVQRVPETESGGRIHTSTATVAILPEAEEVEIELHDKDIRTDTFASTGAGGQSVNTTMSAVRLTHIPTGIVVSMQDERSQLKNKDKAMKVLRARVYDKFEREAREEYDANRKSAVGTGDRSERIRTYNYPQNRVTDHRIGLTIQKLDQIMEGKLDEIIDALILEDQTSKLEHLNDAN</sequence>
<reference key="1">
    <citation type="journal article" date="2001" name="Science">
        <title>Comparative genomics of Listeria species.</title>
        <authorList>
            <person name="Glaser P."/>
            <person name="Frangeul L."/>
            <person name="Buchrieser C."/>
            <person name="Rusniok C."/>
            <person name="Amend A."/>
            <person name="Baquero F."/>
            <person name="Berche P."/>
            <person name="Bloecker H."/>
            <person name="Brandt P."/>
            <person name="Chakraborty T."/>
            <person name="Charbit A."/>
            <person name="Chetouani F."/>
            <person name="Couve E."/>
            <person name="de Daruvar A."/>
            <person name="Dehoux P."/>
            <person name="Domann E."/>
            <person name="Dominguez-Bernal G."/>
            <person name="Duchaud E."/>
            <person name="Durant L."/>
            <person name="Dussurget O."/>
            <person name="Entian K.-D."/>
            <person name="Fsihi H."/>
            <person name="Garcia-del Portillo F."/>
            <person name="Garrido P."/>
            <person name="Gautier L."/>
            <person name="Goebel W."/>
            <person name="Gomez-Lopez N."/>
            <person name="Hain T."/>
            <person name="Hauf J."/>
            <person name="Jackson D."/>
            <person name="Jones L.-M."/>
            <person name="Kaerst U."/>
            <person name="Kreft J."/>
            <person name="Kuhn M."/>
            <person name="Kunst F."/>
            <person name="Kurapkat G."/>
            <person name="Madueno E."/>
            <person name="Maitournam A."/>
            <person name="Mata Vicente J."/>
            <person name="Ng E."/>
            <person name="Nedjari H."/>
            <person name="Nordsiek G."/>
            <person name="Novella S."/>
            <person name="de Pablos B."/>
            <person name="Perez-Diaz J.-C."/>
            <person name="Purcell R."/>
            <person name="Remmel B."/>
            <person name="Rose M."/>
            <person name="Schlueter T."/>
            <person name="Simoes N."/>
            <person name="Tierrez A."/>
            <person name="Vazquez-Boland J.-A."/>
            <person name="Voss H."/>
            <person name="Wehland J."/>
            <person name="Cossart P."/>
        </authorList>
    </citation>
    <scope>NUCLEOTIDE SEQUENCE [LARGE SCALE GENOMIC DNA]</scope>
    <source>
        <strain>ATCC BAA-679 / EGD-e</strain>
    </source>
</reference>
<accession>Q8Y4A8</accession>